<accession>B1XJJ2</accession>
<protein>
    <recommendedName>
        <fullName evidence="1">Large ribosomal subunit protein uL18</fullName>
    </recommendedName>
    <alternativeName>
        <fullName evidence="2">50S ribosomal protein L18</fullName>
    </alternativeName>
</protein>
<feature type="chain" id="PRO_1000142727" description="Large ribosomal subunit protein uL18">
    <location>
        <begin position="1"/>
        <end position="120"/>
    </location>
</feature>
<comment type="function">
    <text evidence="1">This is one of the proteins that bind and probably mediate the attachment of the 5S RNA into the large ribosomal subunit, where it forms part of the central protuberance.</text>
</comment>
<comment type="subunit">
    <text evidence="1">Part of the 50S ribosomal subunit; part of the 5S rRNA/L5/L18/L25 subcomplex. Contacts the 5S and 23S rRNAs.</text>
</comment>
<comment type="similarity">
    <text evidence="1">Belongs to the universal ribosomal protein uL18 family.</text>
</comment>
<gene>
    <name evidence="1" type="primary">rplR</name>
    <name evidence="1" type="synonym">rpl18</name>
    <name type="ordered locus">SYNPCC7002_A1050</name>
</gene>
<sequence length="120" mass="13290">MKATRKQLTQRRHFRIRRRVEGTGDRPRLAVFRSHKHIYAQVIDDEKQHTLVAASTLDKDLKGELASGGNISASTAVGNLIAKRALEKGITKVVFDRGGNLYHGRVKALADAAREAGLDF</sequence>
<evidence type="ECO:0000255" key="1">
    <source>
        <dbReference type="HAMAP-Rule" id="MF_01337"/>
    </source>
</evidence>
<evidence type="ECO:0000305" key="2"/>
<dbReference type="EMBL" id="CP000951">
    <property type="protein sequence ID" value="ACA99052.1"/>
    <property type="molecule type" value="Genomic_DNA"/>
</dbReference>
<dbReference type="RefSeq" id="WP_012306675.1">
    <property type="nucleotide sequence ID" value="NZ_JAHHPU010000001.1"/>
</dbReference>
<dbReference type="SMR" id="B1XJJ2"/>
<dbReference type="STRING" id="32049.SYNPCC7002_A1050"/>
<dbReference type="KEGG" id="syp:SYNPCC7002_A1050"/>
<dbReference type="eggNOG" id="COG0256">
    <property type="taxonomic scope" value="Bacteria"/>
</dbReference>
<dbReference type="HOGENOM" id="CLU_098841_0_1_3"/>
<dbReference type="Proteomes" id="UP000001688">
    <property type="component" value="Chromosome"/>
</dbReference>
<dbReference type="GO" id="GO:0022625">
    <property type="term" value="C:cytosolic large ribosomal subunit"/>
    <property type="evidence" value="ECO:0007669"/>
    <property type="project" value="TreeGrafter"/>
</dbReference>
<dbReference type="GO" id="GO:0008097">
    <property type="term" value="F:5S rRNA binding"/>
    <property type="evidence" value="ECO:0007669"/>
    <property type="project" value="TreeGrafter"/>
</dbReference>
<dbReference type="GO" id="GO:0003735">
    <property type="term" value="F:structural constituent of ribosome"/>
    <property type="evidence" value="ECO:0007669"/>
    <property type="project" value="InterPro"/>
</dbReference>
<dbReference type="GO" id="GO:0006412">
    <property type="term" value="P:translation"/>
    <property type="evidence" value="ECO:0007669"/>
    <property type="project" value="UniProtKB-UniRule"/>
</dbReference>
<dbReference type="CDD" id="cd00432">
    <property type="entry name" value="Ribosomal_L18_L5e"/>
    <property type="match status" value="1"/>
</dbReference>
<dbReference type="FunFam" id="3.30.420.100:FF:000001">
    <property type="entry name" value="50S ribosomal protein L18"/>
    <property type="match status" value="1"/>
</dbReference>
<dbReference type="Gene3D" id="3.30.420.100">
    <property type="match status" value="1"/>
</dbReference>
<dbReference type="HAMAP" id="MF_01337_B">
    <property type="entry name" value="Ribosomal_uL18_B"/>
    <property type="match status" value="1"/>
</dbReference>
<dbReference type="InterPro" id="IPR004389">
    <property type="entry name" value="Ribosomal_uL18_bac-type"/>
</dbReference>
<dbReference type="InterPro" id="IPR005484">
    <property type="entry name" value="Ribosomal_uL18_bac/euk"/>
</dbReference>
<dbReference type="NCBIfam" id="TIGR00060">
    <property type="entry name" value="L18_bact"/>
    <property type="match status" value="1"/>
</dbReference>
<dbReference type="PANTHER" id="PTHR12899">
    <property type="entry name" value="39S RIBOSOMAL PROTEIN L18, MITOCHONDRIAL"/>
    <property type="match status" value="1"/>
</dbReference>
<dbReference type="PANTHER" id="PTHR12899:SF3">
    <property type="entry name" value="LARGE RIBOSOMAL SUBUNIT PROTEIN UL18M"/>
    <property type="match status" value="1"/>
</dbReference>
<dbReference type="Pfam" id="PF00861">
    <property type="entry name" value="Ribosomal_L18p"/>
    <property type="match status" value="1"/>
</dbReference>
<dbReference type="SUPFAM" id="SSF53137">
    <property type="entry name" value="Translational machinery components"/>
    <property type="match status" value="1"/>
</dbReference>
<name>RL18_PICP2</name>
<keyword id="KW-1185">Reference proteome</keyword>
<keyword id="KW-0687">Ribonucleoprotein</keyword>
<keyword id="KW-0689">Ribosomal protein</keyword>
<keyword id="KW-0694">RNA-binding</keyword>
<keyword id="KW-0699">rRNA-binding</keyword>
<reference key="1">
    <citation type="submission" date="2008-02" db="EMBL/GenBank/DDBJ databases">
        <title>Complete sequence of Synechococcus sp. PCC 7002.</title>
        <authorList>
            <person name="Li T."/>
            <person name="Zhao J."/>
            <person name="Zhao C."/>
            <person name="Liu Z."/>
            <person name="Zhao F."/>
            <person name="Marquardt J."/>
            <person name="Nomura C.T."/>
            <person name="Persson S."/>
            <person name="Detter J.C."/>
            <person name="Richardson P.M."/>
            <person name="Lanz C."/>
            <person name="Schuster S.C."/>
            <person name="Wang J."/>
            <person name="Li S."/>
            <person name="Huang X."/>
            <person name="Cai T."/>
            <person name="Yu Z."/>
            <person name="Luo J."/>
            <person name="Zhao J."/>
            <person name="Bryant D.A."/>
        </authorList>
    </citation>
    <scope>NUCLEOTIDE SEQUENCE [LARGE SCALE GENOMIC DNA]</scope>
    <source>
        <strain>ATCC 27264 / PCC 7002 / PR-6</strain>
    </source>
</reference>
<proteinExistence type="inferred from homology"/>
<organism>
    <name type="scientific">Picosynechococcus sp. (strain ATCC 27264 / PCC 7002 / PR-6)</name>
    <name type="common">Agmenellum quadruplicatum</name>
    <dbReference type="NCBI Taxonomy" id="32049"/>
    <lineage>
        <taxon>Bacteria</taxon>
        <taxon>Bacillati</taxon>
        <taxon>Cyanobacteriota</taxon>
        <taxon>Cyanophyceae</taxon>
        <taxon>Oscillatoriophycideae</taxon>
        <taxon>Chroococcales</taxon>
        <taxon>Geminocystaceae</taxon>
        <taxon>Picosynechococcus</taxon>
    </lineage>
</organism>